<sequence>MKAKELREKSVEELNTELLNLLREQFNLRMQAASGQLQQSHLLKQVRRDVARVKTLLNEKAGA</sequence>
<protein>
    <recommendedName>
        <fullName evidence="1">Large ribosomal subunit protein uL29</fullName>
    </recommendedName>
    <alternativeName>
        <fullName evidence="2">50S ribosomal protein L29</fullName>
    </alternativeName>
</protein>
<keyword id="KW-0687">Ribonucleoprotein</keyword>
<keyword id="KW-0689">Ribosomal protein</keyword>
<reference key="1">
    <citation type="journal article" date="2008" name="J. Bacteriol.">
        <title>The complete genome sequence of Escherichia coli DH10B: insights into the biology of a laboratory workhorse.</title>
        <authorList>
            <person name="Durfee T."/>
            <person name="Nelson R."/>
            <person name="Baldwin S."/>
            <person name="Plunkett G. III"/>
            <person name="Burland V."/>
            <person name="Mau B."/>
            <person name="Petrosino J.F."/>
            <person name="Qin X."/>
            <person name="Muzny D.M."/>
            <person name="Ayele M."/>
            <person name="Gibbs R.A."/>
            <person name="Csorgo B."/>
            <person name="Posfai G."/>
            <person name="Weinstock G.M."/>
            <person name="Blattner F.R."/>
        </authorList>
    </citation>
    <scope>NUCLEOTIDE SEQUENCE [LARGE SCALE GENOMIC DNA]</scope>
    <source>
        <strain>K12 / DH10B</strain>
    </source>
</reference>
<name>RL29_ECODH</name>
<accession>B1X6G4</accession>
<dbReference type="EMBL" id="CP000948">
    <property type="protein sequence ID" value="ACB04374.1"/>
    <property type="molecule type" value="Genomic_DNA"/>
</dbReference>
<dbReference type="RefSeq" id="WP_000644741.1">
    <property type="nucleotide sequence ID" value="NC_010473.1"/>
</dbReference>
<dbReference type="SMR" id="B1X6G4"/>
<dbReference type="GeneID" id="93778675"/>
<dbReference type="KEGG" id="ecd:ECDH10B_3487"/>
<dbReference type="HOGENOM" id="CLU_158491_1_2_6"/>
<dbReference type="GO" id="GO:0022625">
    <property type="term" value="C:cytosolic large ribosomal subunit"/>
    <property type="evidence" value="ECO:0007669"/>
    <property type="project" value="TreeGrafter"/>
</dbReference>
<dbReference type="GO" id="GO:0003735">
    <property type="term" value="F:structural constituent of ribosome"/>
    <property type="evidence" value="ECO:0007669"/>
    <property type="project" value="InterPro"/>
</dbReference>
<dbReference type="GO" id="GO:0006412">
    <property type="term" value="P:translation"/>
    <property type="evidence" value="ECO:0007669"/>
    <property type="project" value="UniProtKB-UniRule"/>
</dbReference>
<dbReference type="CDD" id="cd00427">
    <property type="entry name" value="Ribosomal_L29_HIP"/>
    <property type="match status" value="1"/>
</dbReference>
<dbReference type="Gene3D" id="6.10.140.1970">
    <property type="match status" value="1"/>
</dbReference>
<dbReference type="HAMAP" id="MF_00374">
    <property type="entry name" value="Ribosomal_uL29"/>
    <property type="match status" value="1"/>
</dbReference>
<dbReference type="InterPro" id="IPR050063">
    <property type="entry name" value="Ribosomal_protein_uL29"/>
</dbReference>
<dbReference type="InterPro" id="IPR001854">
    <property type="entry name" value="Ribosomal_uL29"/>
</dbReference>
<dbReference type="InterPro" id="IPR018254">
    <property type="entry name" value="Ribosomal_uL29_CS"/>
</dbReference>
<dbReference type="InterPro" id="IPR036049">
    <property type="entry name" value="Ribosomal_uL29_sf"/>
</dbReference>
<dbReference type="NCBIfam" id="TIGR00012">
    <property type="entry name" value="L29"/>
    <property type="match status" value="1"/>
</dbReference>
<dbReference type="PANTHER" id="PTHR10916">
    <property type="entry name" value="60S RIBOSOMAL PROTEIN L35/50S RIBOSOMAL PROTEIN L29"/>
    <property type="match status" value="1"/>
</dbReference>
<dbReference type="PANTHER" id="PTHR10916:SF0">
    <property type="entry name" value="LARGE RIBOSOMAL SUBUNIT PROTEIN UL29C"/>
    <property type="match status" value="1"/>
</dbReference>
<dbReference type="Pfam" id="PF00831">
    <property type="entry name" value="Ribosomal_L29"/>
    <property type="match status" value="1"/>
</dbReference>
<dbReference type="SUPFAM" id="SSF46561">
    <property type="entry name" value="Ribosomal protein L29 (L29p)"/>
    <property type="match status" value="1"/>
</dbReference>
<dbReference type="PROSITE" id="PS00579">
    <property type="entry name" value="RIBOSOMAL_L29"/>
    <property type="match status" value="1"/>
</dbReference>
<gene>
    <name evidence="1" type="primary">rpmC</name>
    <name type="ordered locus">ECDH10B_3487</name>
</gene>
<comment type="similarity">
    <text evidence="1">Belongs to the universal ribosomal protein uL29 family.</text>
</comment>
<evidence type="ECO:0000255" key="1">
    <source>
        <dbReference type="HAMAP-Rule" id="MF_00374"/>
    </source>
</evidence>
<evidence type="ECO:0000305" key="2"/>
<proteinExistence type="inferred from homology"/>
<feature type="chain" id="PRO_1000121768" description="Large ribosomal subunit protein uL29">
    <location>
        <begin position="1"/>
        <end position="63"/>
    </location>
</feature>
<organism>
    <name type="scientific">Escherichia coli (strain K12 / DH10B)</name>
    <dbReference type="NCBI Taxonomy" id="316385"/>
    <lineage>
        <taxon>Bacteria</taxon>
        <taxon>Pseudomonadati</taxon>
        <taxon>Pseudomonadota</taxon>
        <taxon>Gammaproteobacteria</taxon>
        <taxon>Enterobacterales</taxon>
        <taxon>Enterobacteriaceae</taxon>
        <taxon>Escherichia</taxon>
    </lineage>
</organism>